<evidence type="ECO:0000250" key="1"/>
<evidence type="ECO:0000255" key="2">
    <source>
        <dbReference type="HAMAP-Rule" id="MF_01109"/>
    </source>
</evidence>
<protein>
    <recommendedName>
        <fullName evidence="2">Ornithine carbamoyltransferase</fullName>
        <shortName evidence="2">OTCase</shortName>
        <ecNumber evidence="2">2.1.3.3</ecNumber>
    </recommendedName>
</protein>
<gene>
    <name evidence="2" type="primary">arcB</name>
    <name type="ordered locus">SPN23F21810</name>
</gene>
<comment type="function">
    <text evidence="1">Reversibly catalyzes the transfer of the carbamoyl group from carbamoyl phosphate (CP) to the N(epsilon) atom of ornithine (ORN) to produce L-citrulline.</text>
</comment>
<comment type="catalytic activity">
    <reaction evidence="2">
        <text>carbamoyl phosphate + L-ornithine = L-citrulline + phosphate + H(+)</text>
        <dbReference type="Rhea" id="RHEA:19513"/>
        <dbReference type="ChEBI" id="CHEBI:15378"/>
        <dbReference type="ChEBI" id="CHEBI:43474"/>
        <dbReference type="ChEBI" id="CHEBI:46911"/>
        <dbReference type="ChEBI" id="CHEBI:57743"/>
        <dbReference type="ChEBI" id="CHEBI:58228"/>
        <dbReference type="EC" id="2.1.3.3"/>
    </reaction>
</comment>
<comment type="pathway">
    <text evidence="2">Amino-acid degradation; L-arginine degradation via ADI pathway; carbamoyl phosphate from L-arginine: step 2/2.</text>
</comment>
<comment type="subcellular location">
    <subcellularLocation>
        <location evidence="2">Cytoplasm</location>
    </subcellularLocation>
</comment>
<comment type="similarity">
    <text evidence="2">Belongs to the aspartate/ornithine carbamoyltransferase superfamily. OTCase family.</text>
</comment>
<proteinExistence type="inferred from homology"/>
<feature type="chain" id="PRO_1000163986" description="Ornithine carbamoyltransferase">
    <location>
        <begin position="1"/>
        <end position="338"/>
    </location>
</feature>
<feature type="binding site" evidence="2">
    <location>
        <begin position="58"/>
        <end position="61"/>
    </location>
    <ligand>
        <name>carbamoyl phosphate</name>
        <dbReference type="ChEBI" id="CHEBI:58228"/>
    </ligand>
</feature>
<feature type="binding site" evidence="2">
    <location>
        <position position="85"/>
    </location>
    <ligand>
        <name>carbamoyl phosphate</name>
        <dbReference type="ChEBI" id="CHEBI:58228"/>
    </ligand>
</feature>
<feature type="binding site" evidence="2">
    <location>
        <position position="109"/>
    </location>
    <ligand>
        <name>carbamoyl phosphate</name>
        <dbReference type="ChEBI" id="CHEBI:58228"/>
    </ligand>
</feature>
<feature type="binding site" evidence="2">
    <location>
        <begin position="136"/>
        <end position="139"/>
    </location>
    <ligand>
        <name>carbamoyl phosphate</name>
        <dbReference type="ChEBI" id="CHEBI:58228"/>
    </ligand>
</feature>
<feature type="binding site" evidence="2">
    <location>
        <position position="168"/>
    </location>
    <ligand>
        <name>L-ornithine</name>
        <dbReference type="ChEBI" id="CHEBI:46911"/>
    </ligand>
</feature>
<feature type="binding site" evidence="2">
    <location>
        <position position="232"/>
    </location>
    <ligand>
        <name>L-ornithine</name>
        <dbReference type="ChEBI" id="CHEBI:46911"/>
    </ligand>
</feature>
<feature type="binding site" evidence="2">
    <location>
        <begin position="236"/>
        <end position="237"/>
    </location>
    <ligand>
        <name>L-ornithine</name>
        <dbReference type="ChEBI" id="CHEBI:46911"/>
    </ligand>
</feature>
<feature type="binding site" evidence="2">
    <location>
        <begin position="273"/>
        <end position="274"/>
    </location>
    <ligand>
        <name>carbamoyl phosphate</name>
        <dbReference type="ChEBI" id="CHEBI:58228"/>
    </ligand>
</feature>
<feature type="binding site" evidence="2">
    <location>
        <position position="318"/>
    </location>
    <ligand>
        <name>carbamoyl phosphate</name>
        <dbReference type="ChEBI" id="CHEBI:58228"/>
    </ligand>
</feature>
<organism>
    <name type="scientific">Streptococcus pneumoniae (strain ATCC 700669 / Spain 23F-1)</name>
    <dbReference type="NCBI Taxonomy" id="561276"/>
    <lineage>
        <taxon>Bacteria</taxon>
        <taxon>Bacillati</taxon>
        <taxon>Bacillota</taxon>
        <taxon>Bacilli</taxon>
        <taxon>Lactobacillales</taxon>
        <taxon>Streptococcaceae</taxon>
        <taxon>Streptococcus</taxon>
    </lineage>
</organism>
<keyword id="KW-0056">Arginine metabolism</keyword>
<keyword id="KW-0963">Cytoplasm</keyword>
<keyword id="KW-0808">Transferase</keyword>
<sequence length="338" mass="37911">MTNSVFQGRSFLAEKDFTRAELEYLIGLSAHLKDLKKRNIQHHYLAGKNIALLFEKTSTRTRAAFTTAAIDLGAHPEYLGANDIQLGKKESTEDTAKVLGRMFDGIEFRGFSQRMVEELAEFSGVPVWNGLTDEWHPTQMLADYLTVQENFGRLEGLTLVYCGDGRNNVANSLLVTGAILGVNVHIFSPKELFPEKEIVELAEGFAKESGAHVLITEDADEAVKDADVLYTDVWVSMGEEDKFAERVALLKPYQVNMDLVKKAGNENLIFLHCLPAFHDTHTVYGKDVAEKFGVEEMEVTDEVFRSKYARHFDQAENRMHTIKAVMAATLGNLYIPKV</sequence>
<reference key="1">
    <citation type="journal article" date="2009" name="J. Bacteriol.">
        <title>Role of conjugative elements in the evolution of the multidrug-resistant pandemic clone Streptococcus pneumoniae Spain23F ST81.</title>
        <authorList>
            <person name="Croucher N.J."/>
            <person name="Walker D."/>
            <person name="Romero P."/>
            <person name="Lennard N."/>
            <person name="Paterson G.K."/>
            <person name="Bason N.C."/>
            <person name="Mitchell A.M."/>
            <person name="Quail M.A."/>
            <person name="Andrew P.W."/>
            <person name="Parkhill J."/>
            <person name="Bentley S.D."/>
            <person name="Mitchell T.J."/>
        </authorList>
    </citation>
    <scope>NUCLEOTIDE SEQUENCE [LARGE SCALE GENOMIC DNA]</scope>
    <source>
        <strain>ATCC 700669 / Spain 23F-1</strain>
    </source>
</reference>
<accession>B8ZPY8</accession>
<name>OTC_STRPJ</name>
<dbReference type="EC" id="2.1.3.3" evidence="2"/>
<dbReference type="EMBL" id="FM211187">
    <property type="protein sequence ID" value="CAR69915.1"/>
    <property type="molecule type" value="Genomic_DNA"/>
</dbReference>
<dbReference type="SMR" id="B8ZPY8"/>
<dbReference type="KEGG" id="sne:SPN23F21810"/>
<dbReference type="HOGENOM" id="CLU_043846_3_1_9"/>
<dbReference type="UniPathway" id="UPA00254">
    <property type="reaction ID" value="UER00365"/>
</dbReference>
<dbReference type="GO" id="GO:0005737">
    <property type="term" value="C:cytoplasm"/>
    <property type="evidence" value="ECO:0007669"/>
    <property type="project" value="UniProtKB-SubCell"/>
</dbReference>
<dbReference type="GO" id="GO:0016597">
    <property type="term" value="F:amino acid binding"/>
    <property type="evidence" value="ECO:0007669"/>
    <property type="project" value="InterPro"/>
</dbReference>
<dbReference type="GO" id="GO:0004585">
    <property type="term" value="F:ornithine carbamoyltransferase activity"/>
    <property type="evidence" value="ECO:0007669"/>
    <property type="project" value="UniProtKB-UniRule"/>
</dbReference>
<dbReference type="GO" id="GO:0042450">
    <property type="term" value="P:arginine biosynthetic process via ornithine"/>
    <property type="evidence" value="ECO:0007669"/>
    <property type="project" value="TreeGrafter"/>
</dbReference>
<dbReference type="GO" id="GO:0019547">
    <property type="term" value="P:arginine catabolic process to ornithine"/>
    <property type="evidence" value="ECO:0007669"/>
    <property type="project" value="UniProtKB-UniRule"/>
</dbReference>
<dbReference type="GO" id="GO:0019240">
    <property type="term" value="P:citrulline biosynthetic process"/>
    <property type="evidence" value="ECO:0007669"/>
    <property type="project" value="TreeGrafter"/>
</dbReference>
<dbReference type="FunFam" id="3.40.50.1370:FF:000004">
    <property type="entry name" value="Ornithine carbamoyltransferase"/>
    <property type="match status" value="1"/>
</dbReference>
<dbReference type="Gene3D" id="3.40.50.1370">
    <property type="entry name" value="Aspartate/ornithine carbamoyltransferase"/>
    <property type="match status" value="2"/>
</dbReference>
<dbReference type="HAMAP" id="MF_01109">
    <property type="entry name" value="OTCase"/>
    <property type="match status" value="1"/>
</dbReference>
<dbReference type="InterPro" id="IPR006132">
    <property type="entry name" value="Asp/Orn_carbamoyltranf_P-bd"/>
</dbReference>
<dbReference type="InterPro" id="IPR006130">
    <property type="entry name" value="Asp/Orn_carbamoylTrfase"/>
</dbReference>
<dbReference type="InterPro" id="IPR036901">
    <property type="entry name" value="Asp/Orn_carbamoylTrfase_sf"/>
</dbReference>
<dbReference type="InterPro" id="IPR006131">
    <property type="entry name" value="Asp_carbamoyltransf_Asp/Orn-bd"/>
</dbReference>
<dbReference type="InterPro" id="IPR002292">
    <property type="entry name" value="Orn/put_carbamltrans"/>
</dbReference>
<dbReference type="InterPro" id="IPR024904">
    <property type="entry name" value="OTCase_ArgI"/>
</dbReference>
<dbReference type="NCBIfam" id="TIGR00658">
    <property type="entry name" value="orni_carb_tr"/>
    <property type="match status" value="1"/>
</dbReference>
<dbReference type="NCBIfam" id="NF001986">
    <property type="entry name" value="PRK00779.1"/>
    <property type="match status" value="1"/>
</dbReference>
<dbReference type="PANTHER" id="PTHR45753:SF1">
    <property type="entry name" value="ORNITHINE CARBAMOYLTRANSFERASE, CATABOLIC"/>
    <property type="match status" value="1"/>
</dbReference>
<dbReference type="PANTHER" id="PTHR45753">
    <property type="entry name" value="ORNITHINE CARBAMOYLTRANSFERASE, MITOCHONDRIAL"/>
    <property type="match status" value="1"/>
</dbReference>
<dbReference type="Pfam" id="PF00185">
    <property type="entry name" value="OTCace"/>
    <property type="match status" value="1"/>
</dbReference>
<dbReference type="Pfam" id="PF02729">
    <property type="entry name" value="OTCace_N"/>
    <property type="match status" value="1"/>
</dbReference>
<dbReference type="PRINTS" id="PR00100">
    <property type="entry name" value="AOTCASE"/>
</dbReference>
<dbReference type="PRINTS" id="PR00102">
    <property type="entry name" value="OTCASE"/>
</dbReference>
<dbReference type="SUPFAM" id="SSF53671">
    <property type="entry name" value="Aspartate/ornithine carbamoyltransferase"/>
    <property type="match status" value="1"/>
</dbReference>
<dbReference type="PROSITE" id="PS00097">
    <property type="entry name" value="CARBAMOYLTRANSFERASE"/>
    <property type="match status" value="1"/>
</dbReference>